<comment type="similarity">
    <text evidence="1">Belongs to the acetyltransferase family. YpeA subfamily.</text>
</comment>
<dbReference type="EC" id="2.3.1.-" evidence="1"/>
<dbReference type="EMBL" id="AL513382">
    <property type="protein sequence ID" value="CAD07680.1"/>
    <property type="molecule type" value="Genomic_DNA"/>
</dbReference>
<dbReference type="EMBL" id="AE014613">
    <property type="protein sequence ID" value="AAO68127.1"/>
    <property type="molecule type" value="Genomic_DNA"/>
</dbReference>
<dbReference type="RefSeq" id="NP_456984.1">
    <property type="nucleotide sequence ID" value="NC_003198.1"/>
</dbReference>
<dbReference type="RefSeq" id="WP_000406008.1">
    <property type="nucleotide sequence ID" value="NZ_WSUR01000025.1"/>
</dbReference>
<dbReference type="SMR" id="P63424"/>
<dbReference type="STRING" id="220341.gene:17586584"/>
<dbReference type="KEGG" id="stt:t0409"/>
<dbReference type="KEGG" id="sty:STY2686"/>
<dbReference type="PATRIC" id="fig|220341.7.peg.2723"/>
<dbReference type="eggNOG" id="COG0456">
    <property type="taxonomic scope" value="Bacteria"/>
</dbReference>
<dbReference type="HOGENOM" id="CLU_013985_34_1_6"/>
<dbReference type="OMA" id="IAGFDGW"/>
<dbReference type="Proteomes" id="UP000000541">
    <property type="component" value="Chromosome"/>
</dbReference>
<dbReference type="Proteomes" id="UP000002670">
    <property type="component" value="Chromosome"/>
</dbReference>
<dbReference type="GO" id="GO:0016747">
    <property type="term" value="F:acyltransferase activity, transferring groups other than amino-acyl groups"/>
    <property type="evidence" value="ECO:0007669"/>
    <property type="project" value="UniProtKB-UniRule"/>
</dbReference>
<dbReference type="CDD" id="cd04301">
    <property type="entry name" value="NAT_SF"/>
    <property type="match status" value="1"/>
</dbReference>
<dbReference type="Gene3D" id="3.40.630.30">
    <property type="match status" value="1"/>
</dbReference>
<dbReference type="HAMAP" id="MF_01127">
    <property type="entry name" value="Acetyltransf_YpeA"/>
    <property type="match status" value="1"/>
</dbReference>
<dbReference type="InterPro" id="IPR023072">
    <property type="entry name" value="Acetyltransferase_YpeA"/>
</dbReference>
<dbReference type="InterPro" id="IPR017255">
    <property type="entry name" value="AcTrfase_GNAT_prd"/>
</dbReference>
<dbReference type="InterPro" id="IPR016181">
    <property type="entry name" value="Acyl_CoA_acyltransferase"/>
</dbReference>
<dbReference type="InterPro" id="IPR000182">
    <property type="entry name" value="GNAT_dom"/>
</dbReference>
<dbReference type="NCBIfam" id="NF002959">
    <property type="entry name" value="PRK03624.1"/>
    <property type="match status" value="1"/>
</dbReference>
<dbReference type="PANTHER" id="PTHR43072:SF51">
    <property type="entry name" value="ABC SUPERFAMILY TRANSPORT PROTEIN"/>
    <property type="match status" value="1"/>
</dbReference>
<dbReference type="PANTHER" id="PTHR43072">
    <property type="entry name" value="N-ACETYLTRANSFERASE"/>
    <property type="match status" value="1"/>
</dbReference>
<dbReference type="Pfam" id="PF00583">
    <property type="entry name" value="Acetyltransf_1"/>
    <property type="match status" value="1"/>
</dbReference>
<dbReference type="PIRSF" id="PIRSF037663">
    <property type="entry name" value="Acetyltransf_GNAT_prd"/>
    <property type="match status" value="1"/>
</dbReference>
<dbReference type="SUPFAM" id="SSF55729">
    <property type="entry name" value="Acyl-CoA N-acyltransferases (Nat)"/>
    <property type="match status" value="1"/>
</dbReference>
<dbReference type="PROSITE" id="PS51186">
    <property type="entry name" value="GNAT"/>
    <property type="match status" value="1"/>
</dbReference>
<gene>
    <name evidence="1" type="primary">ypeA</name>
    <name type="ordered locus">STY2686</name>
    <name type="ordered locus">t0409</name>
</gene>
<protein>
    <recommendedName>
        <fullName evidence="1">Acetyltransferase YpeA</fullName>
        <ecNumber evidence="1">2.3.1.-</ecNumber>
    </recommendedName>
</protein>
<proteinExistence type="inferred from homology"/>
<evidence type="ECO:0000255" key="1">
    <source>
        <dbReference type="HAMAP-Rule" id="MF_01127"/>
    </source>
</evidence>
<sequence>MEIRVFRQEDFEEVITLWERCDLLRPWNDPEMDIERKVNHDVSLFLVAEVSGEVVGTVMGGYDGHRGSAYYLGVHPEFRGRGIANALLNRLEKKLIARGCPKIQIMVRDDNDVVLGMYERLGYEHSDALSLGKRLIEDEEY</sequence>
<organism>
    <name type="scientific">Salmonella typhi</name>
    <dbReference type="NCBI Taxonomy" id="90370"/>
    <lineage>
        <taxon>Bacteria</taxon>
        <taxon>Pseudomonadati</taxon>
        <taxon>Pseudomonadota</taxon>
        <taxon>Gammaproteobacteria</taxon>
        <taxon>Enterobacterales</taxon>
        <taxon>Enterobacteriaceae</taxon>
        <taxon>Salmonella</taxon>
    </lineage>
</organism>
<reference key="1">
    <citation type="journal article" date="2001" name="Nature">
        <title>Complete genome sequence of a multiple drug resistant Salmonella enterica serovar Typhi CT18.</title>
        <authorList>
            <person name="Parkhill J."/>
            <person name="Dougan G."/>
            <person name="James K.D."/>
            <person name="Thomson N.R."/>
            <person name="Pickard D."/>
            <person name="Wain J."/>
            <person name="Churcher C.M."/>
            <person name="Mungall K.L."/>
            <person name="Bentley S.D."/>
            <person name="Holden M.T.G."/>
            <person name="Sebaihia M."/>
            <person name="Baker S."/>
            <person name="Basham D."/>
            <person name="Brooks K."/>
            <person name="Chillingworth T."/>
            <person name="Connerton P."/>
            <person name="Cronin A."/>
            <person name="Davis P."/>
            <person name="Davies R.M."/>
            <person name="Dowd L."/>
            <person name="White N."/>
            <person name="Farrar J."/>
            <person name="Feltwell T."/>
            <person name="Hamlin N."/>
            <person name="Haque A."/>
            <person name="Hien T.T."/>
            <person name="Holroyd S."/>
            <person name="Jagels K."/>
            <person name="Krogh A."/>
            <person name="Larsen T.S."/>
            <person name="Leather S."/>
            <person name="Moule S."/>
            <person name="O'Gaora P."/>
            <person name="Parry C."/>
            <person name="Quail M.A."/>
            <person name="Rutherford K.M."/>
            <person name="Simmonds M."/>
            <person name="Skelton J."/>
            <person name="Stevens K."/>
            <person name="Whitehead S."/>
            <person name="Barrell B.G."/>
        </authorList>
    </citation>
    <scope>NUCLEOTIDE SEQUENCE [LARGE SCALE GENOMIC DNA]</scope>
    <source>
        <strain>CT18</strain>
    </source>
</reference>
<reference key="2">
    <citation type="journal article" date="2003" name="J. Bacteriol.">
        <title>Comparative genomics of Salmonella enterica serovar Typhi strains Ty2 and CT18.</title>
        <authorList>
            <person name="Deng W."/>
            <person name="Liou S.-R."/>
            <person name="Plunkett G. III"/>
            <person name="Mayhew G.F."/>
            <person name="Rose D.J."/>
            <person name="Burland V."/>
            <person name="Kodoyianni V."/>
            <person name="Schwartz D.C."/>
            <person name="Blattner F.R."/>
        </authorList>
    </citation>
    <scope>NUCLEOTIDE SEQUENCE [LARGE SCALE GENOMIC DNA]</scope>
    <source>
        <strain>ATCC 700931 / Ty2</strain>
    </source>
</reference>
<name>YPEA_SALTI</name>
<accession>P63424</accession>
<accession>Q8Z4V0</accession>
<accession>Q8ZN84</accession>
<feature type="chain" id="PRO_0000074624" description="Acetyltransferase YpeA">
    <location>
        <begin position="1"/>
        <end position="141"/>
    </location>
</feature>
<feature type="domain" description="N-acetyltransferase" evidence="1">
    <location>
        <begin position="1"/>
        <end position="141"/>
    </location>
</feature>
<keyword id="KW-0012">Acyltransferase</keyword>
<keyword id="KW-0808">Transferase</keyword>